<keyword id="KW-1015">Disulfide bond</keyword>
<keyword id="KW-0372">Hormone</keyword>
<keyword id="KW-0479">Metal-binding</keyword>
<keyword id="KW-0964">Secreted</keyword>
<keyword id="KW-0732">Signal</keyword>
<keyword id="KW-0862">Zinc</keyword>
<protein>
    <recommendedName>
        <fullName>Somatotropin</fullName>
    </recommendedName>
    <alternativeName>
        <fullName>Growth hormone</fullName>
    </alternativeName>
</protein>
<comment type="function">
    <text>Growth hormone plays an important role in growth control.</text>
</comment>
<comment type="subcellular location">
    <subcellularLocation>
        <location>Secreted</location>
    </subcellularLocation>
</comment>
<comment type="similarity">
    <text evidence="2">Belongs to the somatotropin/prolactin family.</text>
</comment>
<proteinExistence type="evidence at transcript level"/>
<gene>
    <name type="primary">gh</name>
</gene>
<organism>
    <name type="scientific">Ctenopharyngodon idella</name>
    <name type="common">Grass carp</name>
    <name type="synonym">Leuciscus idella</name>
    <dbReference type="NCBI Taxonomy" id="7959"/>
    <lineage>
        <taxon>Eukaryota</taxon>
        <taxon>Metazoa</taxon>
        <taxon>Chordata</taxon>
        <taxon>Craniata</taxon>
        <taxon>Vertebrata</taxon>
        <taxon>Euteleostomi</taxon>
        <taxon>Actinopterygii</taxon>
        <taxon>Neopterygii</taxon>
        <taxon>Teleostei</taxon>
        <taxon>Ostariophysi</taxon>
        <taxon>Cypriniformes</taxon>
        <taxon>Xenocyprididae</taxon>
        <taxon>Xenocypridinae</taxon>
        <taxon>Ctenopharyngodon</taxon>
    </lineage>
</organism>
<reference key="1">
    <citation type="journal article" date="1991" name="Biochim. Biophys. Acta">
        <title>Cloning and sequencing of the grass carp (Ctenopharyngodon idellus) growth hormone gene.</title>
        <authorList>
            <person name="Ho W.K.K."/>
            <person name="Wong M.W."/>
            <person name="Chan A.P.Y."/>
        </authorList>
    </citation>
    <scope>NUCLEOTIDE SEQUENCE</scope>
</reference>
<reference key="2">
    <citation type="journal article" date="1989" name="Biochem. Biophys. Res. Commun.">
        <title>Cloning of the grass carp growth hormone cDNA.</title>
        <authorList>
            <person name="Ho W.K.K."/>
            <person name="Tsang W.H."/>
            <person name="Dias N.P."/>
        </authorList>
    </citation>
    <scope>NUCLEOTIDE SEQUENCE [MRNA]</scope>
</reference>
<reference key="3">
    <citation type="journal article" date="1992" name="Gen. Comp. Endocrinol.">
        <title>The primary structures of growth hormones of three cyprinid species: bighead carp, silver carp, and grass carp.</title>
        <authorList>
            <person name="Chang Y.S."/>
            <person name="Liu C.S."/>
            <person name="Huang F.-L."/>
            <person name="Lo T.B."/>
        </authorList>
    </citation>
    <scope>NUCLEOTIDE SEQUENCE</scope>
    <source>
        <tissue>Pituitary</tissue>
    </source>
</reference>
<reference key="4">
    <citation type="journal article" date="1992" name="Eur. J. Biochem.">
        <title>Primary-structural and evolutionary analyses of the growth-hormone gene from grass carp (Ctenopharyngodon idellus).</title>
        <authorList>
            <person name="Zhu Z."/>
            <person name="He L."/>
            <person name="Chen T.T."/>
        </authorList>
    </citation>
    <scope>NUCLEOTIDE SEQUENCE [GENOMIC DNA]</scope>
    <source>
        <tissue>Liver</tissue>
    </source>
</reference>
<dbReference type="EMBL" id="M27094">
    <property type="protein sequence ID" value="AAA58724.1"/>
    <property type="molecule type" value="mRNA"/>
</dbReference>
<dbReference type="EMBL" id="X60419">
    <property type="protein sequence ID" value="CAA42948.1"/>
    <property type="molecule type" value="Genomic_DNA"/>
</dbReference>
<dbReference type="EMBL" id="X60474">
    <property type="protein sequence ID" value="CAA43007.1"/>
    <property type="molecule type" value="mRNA"/>
</dbReference>
<dbReference type="EMBL" id="X60988">
    <property type="protein sequence ID" value="CAA43304.1"/>
    <property type="molecule type" value="Genomic_DNA"/>
</dbReference>
<dbReference type="PIR" id="A32424">
    <property type="entry name" value="A32424"/>
</dbReference>
<dbReference type="SMR" id="P69158"/>
<dbReference type="OrthoDB" id="9925773at2759"/>
<dbReference type="GO" id="GO:0005615">
    <property type="term" value="C:extracellular space"/>
    <property type="evidence" value="ECO:0007669"/>
    <property type="project" value="InterPro"/>
</dbReference>
<dbReference type="GO" id="GO:0070186">
    <property type="term" value="F:growth hormone activity"/>
    <property type="evidence" value="ECO:0007669"/>
    <property type="project" value="TreeGrafter"/>
</dbReference>
<dbReference type="GO" id="GO:0005131">
    <property type="term" value="F:growth hormone receptor binding"/>
    <property type="evidence" value="ECO:0007669"/>
    <property type="project" value="InterPro"/>
</dbReference>
<dbReference type="GO" id="GO:0046872">
    <property type="term" value="F:metal ion binding"/>
    <property type="evidence" value="ECO:0007669"/>
    <property type="project" value="UniProtKB-KW"/>
</dbReference>
<dbReference type="GO" id="GO:0048513">
    <property type="term" value="P:animal organ development"/>
    <property type="evidence" value="ECO:0007669"/>
    <property type="project" value="TreeGrafter"/>
</dbReference>
<dbReference type="GO" id="GO:0060396">
    <property type="term" value="P:growth hormone receptor signaling pathway"/>
    <property type="evidence" value="ECO:0007669"/>
    <property type="project" value="TreeGrafter"/>
</dbReference>
<dbReference type="GO" id="GO:0045927">
    <property type="term" value="P:positive regulation of growth"/>
    <property type="evidence" value="ECO:0007669"/>
    <property type="project" value="TreeGrafter"/>
</dbReference>
<dbReference type="GO" id="GO:0046427">
    <property type="term" value="P:positive regulation of receptor signaling pathway via JAK-STAT"/>
    <property type="evidence" value="ECO:0007669"/>
    <property type="project" value="TreeGrafter"/>
</dbReference>
<dbReference type="GO" id="GO:0031667">
    <property type="term" value="P:response to nutrient levels"/>
    <property type="evidence" value="ECO:0007669"/>
    <property type="project" value="TreeGrafter"/>
</dbReference>
<dbReference type="CDD" id="cd10285">
    <property type="entry name" value="somatotropin_like"/>
    <property type="match status" value="1"/>
</dbReference>
<dbReference type="FunFam" id="1.20.1250.10:FF:000009">
    <property type="entry name" value="Growth hormone"/>
    <property type="match status" value="1"/>
</dbReference>
<dbReference type="Gene3D" id="1.20.1250.10">
    <property type="match status" value="1"/>
</dbReference>
<dbReference type="InterPro" id="IPR009079">
    <property type="entry name" value="4_helix_cytokine-like_core"/>
</dbReference>
<dbReference type="InterPro" id="IPR034975">
    <property type="entry name" value="Somatotropin"/>
</dbReference>
<dbReference type="InterPro" id="IPR001400">
    <property type="entry name" value="Somatotropin/Prolactin"/>
</dbReference>
<dbReference type="InterPro" id="IPR018116">
    <property type="entry name" value="Somatotropin_CS"/>
</dbReference>
<dbReference type="PANTHER" id="PTHR11417:SF2">
    <property type="entry name" value="SOMATOTROPIN"/>
    <property type="match status" value="1"/>
</dbReference>
<dbReference type="PANTHER" id="PTHR11417">
    <property type="entry name" value="SOMATOTROPIN,PROLACTIN"/>
    <property type="match status" value="1"/>
</dbReference>
<dbReference type="Pfam" id="PF00103">
    <property type="entry name" value="Hormone_1"/>
    <property type="match status" value="1"/>
</dbReference>
<dbReference type="PRINTS" id="PR00836">
    <property type="entry name" value="SOMATOTROPIN"/>
</dbReference>
<dbReference type="SUPFAM" id="SSF47266">
    <property type="entry name" value="4-helical cytokines"/>
    <property type="match status" value="1"/>
</dbReference>
<dbReference type="PROSITE" id="PS00266">
    <property type="entry name" value="SOMATOTROPIN_1"/>
    <property type="match status" value="1"/>
</dbReference>
<dbReference type="PROSITE" id="PS00338">
    <property type="entry name" value="SOMATOTROPIN_2"/>
    <property type="match status" value="1"/>
</dbReference>
<feature type="signal peptide" evidence="1">
    <location>
        <begin position="1"/>
        <end position="23"/>
    </location>
</feature>
<feature type="chain" id="PRO_0000033019" description="Somatotropin">
    <location>
        <begin position="24"/>
        <end position="210"/>
    </location>
</feature>
<feature type="binding site" evidence="1">
    <location>
        <position position="38"/>
    </location>
    <ligand>
        <name>Zn(2+)</name>
        <dbReference type="ChEBI" id="CHEBI:29105"/>
    </ligand>
</feature>
<feature type="binding site" evidence="1">
    <location>
        <position position="192"/>
    </location>
    <ligand>
        <name>Zn(2+)</name>
        <dbReference type="ChEBI" id="CHEBI:29105"/>
    </ligand>
</feature>
<feature type="disulfide bond" evidence="1">
    <location>
        <begin position="71"/>
        <end position="183"/>
    </location>
</feature>
<feature type="disulfide bond" evidence="1">
    <location>
        <begin position="200"/>
        <end position="208"/>
    </location>
</feature>
<feature type="sequence conflict" description="In Ref. 2 and 3." evidence="2" ref="2 3">
    <original>S</original>
    <variation>C</variation>
    <location>
        <position position="73"/>
    </location>
</feature>
<feature type="sequence conflict" description="In Ref. 3; CAA43007." evidence="2" ref="3">
    <original>S</original>
    <variation>R</variation>
    <location>
        <position position="112"/>
    </location>
</feature>
<feature type="sequence conflict" description="In Ref. 2 and 3." evidence="2" ref="2 3">
    <original>A</original>
    <variation>Q</variation>
    <location>
        <position position="114"/>
    </location>
</feature>
<sequence length="210" mass="23580">MARALVLLSVVLVSLLVNQGTASENQRLFNNAVIRVQHLHQLAAKMINDFEDNLLPEERRQLSKIFPLSFCNSDSIEAPTGKDETQKSSMLKLLRISFRLIESWEFPSQTLSGAVSNSLTVGNPNQITEKLADLKVGISVLIKGCLDGQPNMDDNDSLPLPFEDFYLTMGESSLRESFRLLACFKKDMHKVETYLRVANCRRSLDSNCTL</sequence>
<accession>P69158</accession>
<accession>P20390</accession>
<accession>Q00220</accession>
<accession>Q00221</accession>
<evidence type="ECO:0000250" key="1"/>
<evidence type="ECO:0000305" key="2"/>
<name>SOMA_CTEID</name>